<keyword id="KW-1185">Reference proteome</keyword>
<keyword id="KW-0687">Ribonucleoprotein</keyword>
<keyword id="KW-0689">Ribosomal protein</keyword>
<keyword id="KW-0694">RNA-binding</keyword>
<keyword id="KW-0699">rRNA-binding</keyword>
<keyword id="KW-0820">tRNA-binding</keyword>
<reference key="1">
    <citation type="journal article" date="2003" name="Proc. Natl. Acad. Sci. U.S.A.">
        <title>The complete genome sequence of the Arabidopsis and tomato pathogen Pseudomonas syringae pv. tomato DC3000.</title>
        <authorList>
            <person name="Buell C.R."/>
            <person name="Joardar V."/>
            <person name="Lindeberg M."/>
            <person name="Selengut J."/>
            <person name="Paulsen I.T."/>
            <person name="Gwinn M.L."/>
            <person name="Dodson R.J."/>
            <person name="DeBoy R.T."/>
            <person name="Durkin A.S."/>
            <person name="Kolonay J.F."/>
            <person name="Madupu R."/>
            <person name="Daugherty S.C."/>
            <person name="Brinkac L.M."/>
            <person name="Beanan M.J."/>
            <person name="Haft D.H."/>
            <person name="Nelson W.C."/>
            <person name="Davidsen T.M."/>
            <person name="Zafar N."/>
            <person name="Zhou L."/>
            <person name="Liu J."/>
            <person name="Yuan Q."/>
            <person name="Khouri H.M."/>
            <person name="Fedorova N.B."/>
            <person name="Tran B."/>
            <person name="Russell D."/>
            <person name="Berry K.J."/>
            <person name="Utterback T.R."/>
            <person name="Van Aken S.E."/>
            <person name="Feldblyum T.V."/>
            <person name="D'Ascenzo M."/>
            <person name="Deng W.-L."/>
            <person name="Ramos A.R."/>
            <person name="Alfano J.R."/>
            <person name="Cartinhour S."/>
            <person name="Chatterjee A.K."/>
            <person name="Delaney T.P."/>
            <person name="Lazarowitz S.G."/>
            <person name="Martin G.B."/>
            <person name="Schneider D.J."/>
            <person name="Tang X."/>
            <person name="Bender C.L."/>
            <person name="White O."/>
            <person name="Fraser C.M."/>
            <person name="Collmer A."/>
        </authorList>
    </citation>
    <scope>NUCLEOTIDE SEQUENCE [LARGE SCALE GENOMIC DNA]</scope>
    <source>
        <strain>ATCC BAA-871 / DC3000</strain>
    </source>
</reference>
<comment type="function">
    <text evidence="1">Binds 23S rRNA and is also seen to make contacts with the A and possibly P site tRNAs.</text>
</comment>
<comment type="subunit">
    <text evidence="1">Part of the 50S ribosomal subunit.</text>
</comment>
<comment type="similarity">
    <text evidence="1">Belongs to the universal ribosomal protein uL16 family.</text>
</comment>
<name>RL16_PSESM</name>
<dbReference type="EMBL" id="AE016853">
    <property type="protein sequence ID" value="AAO54175.1"/>
    <property type="molecule type" value="Genomic_DNA"/>
</dbReference>
<dbReference type="RefSeq" id="NP_790480.1">
    <property type="nucleotide sequence ID" value="NC_004578.1"/>
</dbReference>
<dbReference type="RefSeq" id="WP_002555482.1">
    <property type="nucleotide sequence ID" value="NC_004578.1"/>
</dbReference>
<dbReference type="SMR" id="Q889W4"/>
<dbReference type="STRING" id="223283.PSPTO_0633"/>
<dbReference type="GeneID" id="96221023"/>
<dbReference type="KEGG" id="pst:PSPTO_0633"/>
<dbReference type="PATRIC" id="fig|223283.9.peg.639"/>
<dbReference type="eggNOG" id="COG0197">
    <property type="taxonomic scope" value="Bacteria"/>
</dbReference>
<dbReference type="HOGENOM" id="CLU_078858_2_1_6"/>
<dbReference type="OrthoDB" id="9802589at2"/>
<dbReference type="PhylomeDB" id="Q889W4"/>
<dbReference type="Proteomes" id="UP000002515">
    <property type="component" value="Chromosome"/>
</dbReference>
<dbReference type="GO" id="GO:0022625">
    <property type="term" value="C:cytosolic large ribosomal subunit"/>
    <property type="evidence" value="ECO:0007669"/>
    <property type="project" value="TreeGrafter"/>
</dbReference>
<dbReference type="GO" id="GO:0019843">
    <property type="term" value="F:rRNA binding"/>
    <property type="evidence" value="ECO:0007669"/>
    <property type="project" value="UniProtKB-UniRule"/>
</dbReference>
<dbReference type="GO" id="GO:0003735">
    <property type="term" value="F:structural constituent of ribosome"/>
    <property type="evidence" value="ECO:0007669"/>
    <property type="project" value="InterPro"/>
</dbReference>
<dbReference type="GO" id="GO:0000049">
    <property type="term" value="F:tRNA binding"/>
    <property type="evidence" value="ECO:0007669"/>
    <property type="project" value="UniProtKB-KW"/>
</dbReference>
<dbReference type="GO" id="GO:0006412">
    <property type="term" value="P:translation"/>
    <property type="evidence" value="ECO:0007669"/>
    <property type="project" value="UniProtKB-UniRule"/>
</dbReference>
<dbReference type="CDD" id="cd01433">
    <property type="entry name" value="Ribosomal_L16_L10e"/>
    <property type="match status" value="1"/>
</dbReference>
<dbReference type="FunFam" id="3.90.1170.10:FF:000001">
    <property type="entry name" value="50S ribosomal protein L16"/>
    <property type="match status" value="1"/>
</dbReference>
<dbReference type="Gene3D" id="3.90.1170.10">
    <property type="entry name" value="Ribosomal protein L10e/L16"/>
    <property type="match status" value="1"/>
</dbReference>
<dbReference type="HAMAP" id="MF_01342">
    <property type="entry name" value="Ribosomal_uL16"/>
    <property type="match status" value="1"/>
</dbReference>
<dbReference type="InterPro" id="IPR047873">
    <property type="entry name" value="Ribosomal_uL16"/>
</dbReference>
<dbReference type="InterPro" id="IPR000114">
    <property type="entry name" value="Ribosomal_uL16_bact-type"/>
</dbReference>
<dbReference type="InterPro" id="IPR020798">
    <property type="entry name" value="Ribosomal_uL16_CS"/>
</dbReference>
<dbReference type="InterPro" id="IPR016180">
    <property type="entry name" value="Ribosomal_uL16_dom"/>
</dbReference>
<dbReference type="InterPro" id="IPR036920">
    <property type="entry name" value="Ribosomal_uL16_sf"/>
</dbReference>
<dbReference type="NCBIfam" id="TIGR01164">
    <property type="entry name" value="rplP_bact"/>
    <property type="match status" value="1"/>
</dbReference>
<dbReference type="PANTHER" id="PTHR12220">
    <property type="entry name" value="50S/60S RIBOSOMAL PROTEIN L16"/>
    <property type="match status" value="1"/>
</dbReference>
<dbReference type="PANTHER" id="PTHR12220:SF13">
    <property type="entry name" value="LARGE RIBOSOMAL SUBUNIT PROTEIN UL16M"/>
    <property type="match status" value="1"/>
</dbReference>
<dbReference type="Pfam" id="PF00252">
    <property type="entry name" value="Ribosomal_L16"/>
    <property type="match status" value="1"/>
</dbReference>
<dbReference type="PRINTS" id="PR00060">
    <property type="entry name" value="RIBOSOMALL16"/>
</dbReference>
<dbReference type="SUPFAM" id="SSF54686">
    <property type="entry name" value="Ribosomal protein L16p/L10e"/>
    <property type="match status" value="1"/>
</dbReference>
<dbReference type="PROSITE" id="PS00586">
    <property type="entry name" value="RIBOSOMAL_L16_1"/>
    <property type="match status" value="1"/>
</dbReference>
<dbReference type="PROSITE" id="PS00701">
    <property type="entry name" value="RIBOSOMAL_L16_2"/>
    <property type="match status" value="1"/>
</dbReference>
<evidence type="ECO:0000255" key="1">
    <source>
        <dbReference type="HAMAP-Rule" id="MF_01342"/>
    </source>
</evidence>
<evidence type="ECO:0000305" key="2"/>
<protein>
    <recommendedName>
        <fullName evidence="1">Large ribosomal subunit protein uL16</fullName>
    </recommendedName>
    <alternativeName>
        <fullName evidence="2">50S ribosomal protein L16</fullName>
    </alternativeName>
</protein>
<sequence length="137" mass="15430">MLQPKRTKFRKQMTGHNRGLALRGSKVSFGEFALKSVARGRLTARQIESARRALTRHVKRGGKIWIRVFPDKPVTKKPLEVRMGKGKGNVEYWVAQIQPGKVLYEIEGVTEELAREAFALAAAKLPLATSFVKRTVM</sequence>
<organism>
    <name type="scientific">Pseudomonas syringae pv. tomato (strain ATCC BAA-871 / DC3000)</name>
    <dbReference type="NCBI Taxonomy" id="223283"/>
    <lineage>
        <taxon>Bacteria</taxon>
        <taxon>Pseudomonadati</taxon>
        <taxon>Pseudomonadota</taxon>
        <taxon>Gammaproteobacteria</taxon>
        <taxon>Pseudomonadales</taxon>
        <taxon>Pseudomonadaceae</taxon>
        <taxon>Pseudomonas</taxon>
    </lineage>
</organism>
<feature type="chain" id="PRO_0000062178" description="Large ribosomal subunit protein uL16">
    <location>
        <begin position="1"/>
        <end position="137"/>
    </location>
</feature>
<proteinExistence type="inferred from homology"/>
<gene>
    <name evidence="1" type="primary">rplP</name>
    <name type="ordered locus">PSPTO_0633</name>
</gene>
<accession>Q889W4</accession>